<dbReference type="EC" id="6.1.1.6"/>
<dbReference type="EC" id="2.3.2.3"/>
<dbReference type="EMBL" id="CP000656">
    <property type="protein sequence ID" value="ABP46018.1"/>
    <property type="molecule type" value="Genomic_DNA"/>
</dbReference>
<dbReference type="SMR" id="A4T9U2"/>
<dbReference type="STRING" id="350054.Mflv_3544"/>
<dbReference type="KEGG" id="mgi:Mflv_3544"/>
<dbReference type="eggNOG" id="COG1190">
    <property type="taxonomic scope" value="Bacteria"/>
</dbReference>
<dbReference type="eggNOG" id="COG2898">
    <property type="taxonomic scope" value="Bacteria"/>
</dbReference>
<dbReference type="HOGENOM" id="CLU_008255_2_0_11"/>
<dbReference type="OrthoDB" id="9801152at2"/>
<dbReference type="GO" id="GO:0005829">
    <property type="term" value="C:cytosol"/>
    <property type="evidence" value="ECO:0007669"/>
    <property type="project" value="TreeGrafter"/>
</dbReference>
<dbReference type="GO" id="GO:0005886">
    <property type="term" value="C:plasma membrane"/>
    <property type="evidence" value="ECO:0007669"/>
    <property type="project" value="UniProtKB-SubCell"/>
</dbReference>
<dbReference type="GO" id="GO:0005524">
    <property type="term" value="F:ATP binding"/>
    <property type="evidence" value="ECO:0007669"/>
    <property type="project" value="UniProtKB-UniRule"/>
</dbReference>
<dbReference type="GO" id="GO:0003677">
    <property type="term" value="F:DNA binding"/>
    <property type="evidence" value="ECO:0007669"/>
    <property type="project" value="UniProtKB-KW"/>
</dbReference>
<dbReference type="GO" id="GO:0004824">
    <property type="term" value="F:lysine-tRNA ligase activity"/>
    <property type="evidence" value="ECO:0007669"/>
    <property type="project" value="UniProtKB-UniRule"/>
</dbReference>
<dbReference type="GO" id="GO:0000287">
    <property type="term" value="F:magnesium ion binding"/>
    <property type="evidence" value="ECO:0007669"/>
    <property type="project" value="UniProtKB-UniRule"/>
</dbReference>
<dbReference type="GO" id="GO:0050071">
    <property type="term" value="F:phosphatidylglycerol lysyltransferase activity"/>
    <property type="evidence" value="ECO:0007669"/>
    <property type="project" value="UniProtKB-EC"/>
</dbReference>
<dbReference type="GO" id="GO:0000049">
    <property type="term" value="F:tRNA binding"/>
    <property type="evidence" value="ECO:0007669"/>
    <property type="project" value="TreeGrafter"/>
</dbReference>
<dbReference type="GO" id="GO:0006629">
    <property type="term" value="P:lipid metabolic process"/>
    <property type="evidence" value="ECO:0007669"/>
    <property type="project" value="UniProtKB-KW"/>
</dbReference>
<dbReference type="GO" id="GO:0006430">
    <property type="term" value="P:lysyl-tRNA aminoacylation"/>
    <property type="evidence" value="ECO:0007669"/>
    <property type="project" value="UniProtKB-UniRule"/>
</dbReference>
<dbReference type="GO" id="GO:0046677">
    <property type="term" value="P:response to antibiotic"/>
    <property type="evidence" value="ECO:0007669"/>
    <property type="project" value="UniProtKB-KW"/>
</dbReference>
<dbReference type="CDD" id="cd04322">
    <property type="entry name" value="LysRS_N"/>
    <property type="match status" value="1"/>
</dbReference>
<dbReference type="Gene3D" id="3.30.930.10">
    <property type="entry name" value="Bira Bifunctional Protein, Domain 2"/>
    <property type="match status" value="1"/>
</dbReference>
<dbReference type="Gene3D" id="2.40.50.140">
    <property type="entry name" value="Nucleic acid-binding proteins"/>
    <property type="match status" value="1"/>
</dbReference>
<dbReference type="HAMAP" id="MF_00252">
    <property type="entry name" value="Lys_tRNA_synth_class2"/>
    <property type="match status" value="1"/>
</dbReference>
<dbReference type="InterPro" id="IPR004364">
    <property type="entry name" value="Aa-tRNA-synt_II"/>
</dbReference>
<dbReference type="InterPro" id="IPR006195">
    <property type="entry name" value="aa-tRNA-synth_II"/>
</dbReference>
<dbReference type="InterPro" id="IPR045864">
    <property type="entry name" value="aa-tRNA-synth_II/BPL/LPL"/>
</dbReference>
<dbReference type="InterPro" id="IPR024320">
    <property type="entry name" value="LPG_synthase_C"/>
</dbReference>
<dbReference type="InterPro" id="IPR002313">
    <property type="entry name" value="Lys-tRNA-ligase_II"/>
</dbReference>
<dbReference type="InterPro" id="IPR044136">
    <property type="entry name" value="Lys-tRNA-ligase_II_N"/>
</dbReference>
<dbReference type="InterPro" id="IPR018149">
    <property type="entry name" value="Lys-tRNA-synth_II_C"/>
</dbReference>
<dbReference type="InterPro" id="IPR012340">
    <property type="entry name" value="NA-bd_OB-fold"/>
</dbReference>
<dbReference type="InterPro" id="IPR004365">
    <property type="entry name" value="NA-bd_OB_tRNA"/>
</dbReference>
<dbReference type="InterPro" id="IPR031553">
    <property type="entry name" value="tRNA-synt_2_TM"/>
</dbReference>
<dbReference type="NCBIfam" id="TIGR00499">
    <property type="entry name" value="lysS_bact"/>
    <property type="match status" value="1"/>
</dbReference>
<dbReference type="NCBIfam" id="NF001756">
    <property type="entry name" value="PRK00484.1"/>
    <property type="match status" value="1"/>
</dbReference>
<dbReference type="NCBIfam" id="NF002821">
    <property type="entry name" value="PRK02983.1"/>
    <property type="match status" value="1"/>
</dbReference>
<dbReference type="PANTHER" id="PTHR42918:SF15">
    <property type="entry name" value="LYSINE--TRNA LIGASE, CHLOROPLASTIC_MITOCHONDRIAL"/>
    <property type="match status" value="1"/>
</dbReference>
<dbReference type="PANTHER" id="PTHR42918">
    <property type="entry name" value="LYSYL-TRNA SYNTHETASE"/>
    <property type="match status" value="1"/>
</dbReference>
<dbReference type="Pfam" id="PF09924">
    <property type="entry name" value="LPG_synthase_C"/>
    <property type="match status" value="1"/>
</dbReference>
<dbReference type="Pfam" id="PF00152">
    <property type="entry name" value="tRNA-synt_2"/>
    <property type="match status" value="1"/>
</dbReference>
<dbReference type="Pfam" id="PF16995">
    <property type="entry name" value="tRNA-synt_2_TM"/>
    <property type="match status" value="1"/>
</dbReference>
<dbReference type="Pfam" id="PF01336">
    <property type="entry name" value="tRNA_anti-codon"/>
    <property type="match status" value="1"/>
</dbReference>
<dbReference type="PRINTS" id="PR00982">
    <property type="entry name" value="TRNASYNTHLYS"/>
</dbReference>
<dbReference type="SUPFAM" id="SSF55681">
    <property type="entry name" value="Class II aaRS and biotin synthetases"/>
    <property type="match status" value="1"/>
</dbReference>
<dbReference type="SUPFAM" id="SSF50249">
    <property type="entry name" value="Nucleic acid-binding proteins"/>
    <property type="match status" value="1"/>
</dbReference>
<dbReference type="PROSITE" id="PS50862">
    <property type="entry name" value="AA_TRNA_LIGASE_II"/>
    <property type="match status" value="1"/>
</dbReference>
<gene>
    <name type="primary">lysX</name>
    <name type="ordered locus">Mflv_3544</name>
</gene>
<evidence type="ECO:0000250" key="1"/>
<evidence type="ECO:0000255" key="2"/>
<evidence type="ECO:0000305" key="3"/>
<feature type="chain" id="PRO_0000394319" description="Lysylphosphatidylglycerol biosynthesis bifunctional protein LysX">
    <location>
        <begin position="1"/>
        <end position="1101"/>
    </location>
</feature>
<feature type="transmembrane region" description="Helical" evidence="2">
    <location>
        <begin position="18"/>
        <end position="38"/>
    </location>
</feature>
<feature type="transmembrane region" description="Helical" evidence="2">
    <location>
        <begin position="60"/>
        <end position="80"/>
    </location>
</feature>
<feature type="transmembrane region" description="Helical" evidence="2">
    <location>
        <begin position="84"/>
        <end position="104"/>
    </location>
</feature>
<feature type="transmembrane region" description="Helical" evidence="2">
    <location>
        <begin position="113"/>
        <end position="133"/>
    </location>
</feature>
<feature type="transmembrane region" description="Helical" evidence="2">
    <location>
        <begin position="151"/>
        <end position="171"/>
    </location>
</feature>
<feature type="transmembrane region" description="Helical" evidence="2">
    <location>
        <begin position="183"/>
        <end position="200"/>
    </location>
</feature>
<feature type="transmembrane region" description="Helical" evidence="2">
    <location>
        <begin position="207"/>
        <end position="227"/>
    </location>
</feature>
<feature type="DNA-binding region" description="OB">
    <location>
        <begin position="662"/>
        <end position="740"/>
    </location>
</feature>
<feature type="region of interest" description="Phosphatidylglycerol lysyltransferase">
    <location>
        <begin position="1"/>
        <end position="601"/>
    </location>
</feature>
<feature type="region of interest" description="Lysine--tRNA ligase">
    <location>
        <begin position="602"/>
        <end position="1101"/>
    </location>
</feature>
<feature type="binding site" evidence="1">
    <location>
        <position position="1013"/>
    </location>
    <ligand>
        <name>Mg(2+)</name>
        <dbReference type="ChEBI" id="CHEBI:18420"/>
        <label>1</label>
    </ligand>
</feature>
<feature type="binding site" evidence="1">
    <location>
        <position position="1020"/>
    </location>
    <ligand>
        <name>Mg(2+)</name>
        <dbReference type="ChEBI" id="CHEBI:18420"/>
        <label>1</label>
    </ligand>
</feature>
<feature type="binding site" evidence="1">
    <location>
        <position position="1020"/>
    </location>
    <ligand>
        <name>Mg(2+)</name>
        <dbReference type="ChEBI" id="CHEBI:18420"/>
        <label>2</label>
    </ligand>
</feature>
<keyword id="KW-0030">Aminoacyl-tRNA synthetase</keyword>
<keyword id="KW-0046">Antibiotic resistance</keyword>
<keyword id="KW-0067">ATP-binding</keyword>
<keyword id="KW-1003">Cell membrane</keyword>
<keyword id="KW-0238">DNA-binding</keyword>
<keyword id="KW-0436">Ligase</keyword>
<keyword id="KW-0443">Lipid metabolism</keyword>
<keyword id="KW-0460">Magnesium</keyword>
<keyword id="KW-0472">Membrane</keyword>
<keyword id="KW-0479">Metal-binding</keyword>
<keyword id="KW-0511">Multifunctional enzyme</keyword>
<keyword id="KW-0547">Nucleotide-binding</keyword>
<keyword id="KW-0808">Transferase</keyword>
<keyword id="KW-0812">Transmembrane</keyword>
<keyword id="KW-1133">Transmembrane helix</keyword>
<protein>
    <recommendedName>
        <fullName>Lysylphosphatidylglycerol biosynthesis bifunctional protein LysX</fullName>
    </recommendedName>
    <domain>
        <recommendedName>
            <fullName>Lysine--tRNA ligase</fullName>
            <ecNumber>6.1.1.6</ecNumber>
        </recommendedName>
        <alternativeName>
            <fullName>Lysyl-tRNA synthetase</fullName>
            <shortName>LysRS</shortName>
        </alternativeName>
    </domain>
    <domain>
        <recommendedName>
            <fullName>Phosphatidylglycerol lysyltransferase</fullName>
            <ecNumber>2.3.2.3</ecNumber>
        </recommendedName>
        <alternativeName>
            <fullName>Lysylphosphatidylglycerol synthetase</fullName>
            <shortName>LPG synthetase</shortName>
        </alternativeName>
    </domain>
</protein>
<name>LYSX_MYCGI</name>
<sequence>MTATRLVRAHPESSHRWVPAAAGWIVGVIATLSLLASVSPLVRSIIRVPREFVDDYIFNFPDTSFAWAFVLALLAAALAARKRIAWWILTGYMVAAAVWNVTGLLDGDRWFEDVGEIIGLGFHLAAIASLLLARREFWARVRPGALVKAAVTLVAGLGVGTLIGWGLLELFPGTLARPDRFWYALNRVGAFAGADAGAFSGHPHVLVNALLGLFGAMALMIAAVVLFQSQRADNALTGEDESAIRGLLELYGKNDSLGYFATRRDKAVVFAPNGRAAITYRVEVGVCLASGDPVGDPKAWPQAIEAWLTLCETYGWAPGVMGASATGAQAFRQAGLHALQLGDEAILHPDDFRLSGPEMRAVRQAVTRARRAGVAVRFRRHRELSPDEMAEVIAHADAWRDTEDERGFSMALGRLGDPADADCLLVEAVQNGTQVVAMLSLVPWGSNGVSLDLMRRAPQSPNGTIELMVSELCLQSESIGISRISLNFAMFRSAFEQGAQLGAGPVARLWRWLLVFFSRWWQLETLYRSNMKYQPEWVPRYACYEDARLVPRVGVASVIAEGFLVLPFSRRHDQPHTGHHIAAPGDLIATGRLHSDGTAPDRIGPVGDGADDDAAPRLPEQVRVRMAKLSALQDRGVDAYPVGSPPSHTIAEAIAAEEGTEVTVSGRVLRARDYGGVLFGQLRDWSAETQVALDNSALLDGTTTDFTRTVDLGDLIEVTGTMGHTRSGSWSVLVTRWRLIGKCLRPLPDKWKGLTDQEARVRARYVDLAVNTDARELIKARSAILHAIRETLVGKGFLEVETPILQQIHGGANARPFLTHINAYDLDLYLRIAPELYLKRLCVGGVERVFELGRAFRNEGVDFSHNPEFTLLEAYQAHADYTVWIDGCRELIQNAAMAANGSHVFFRPREDGVLEPVDISGRWAVKTVHGAVSEALGEHIDVDTDLATLRRLCDKAGIPYLTHWDAGAVVLEMYEHLVEDQTTEPTFYKDFPTSVSPLTRPHRSIPGVAERWDLVAWGVELGTAYSELTDPVEQRRRLQEQSLLAAGGDPEAMELDEDFLQAMEYAMPPTGGLGMGVDRVVMLITGRSIRETLPFPLAKPR</sequence>
<proteinExistence type="inferred from homology"/>
<reference key="1">
    <citation type="submission" date="2007-04" db="EMBL/GenBank/DDBJ databases">
        <title>Complete sequence of chromosome of Mycobacterium gilvum PYR-GCK.</title>
        <authorList>
            <consortium name="US DOE Joint Genome Institute"/>
            <person name="Copeland A."/>
            <person name="Lucas S."/>
            <person name="Lapidus A."/>
            <person name="Barry K."/>
            <person name="Detter J.C."/>
            <person name="Glavina del Rio T."/>
            <person name="Hammon N."/>
            <person name="Israni S."/>
            <person name="Dalin E."/>
            <person name="Tice H."/>
            <person name="Pitluck S."/>
            <person name="Chain P."/>
            <person name="Malfatti S."/>
            <person name="Shin M."/>
            <person name="Vergez L."/>
            <person name="Schmutz J."/>
            <person name="Larimer F."/>
            <person name="Land M."/>
            <person name="Hauser L."/>
            <person name="Kyrpides N."/>
            <person name="Mikhailova N."/>
            <person name="Miller C."/>
            <person name="Richardson P."/>
        </authorList>
    </citation>
    <scope>NUCLEOTIDE SEQUENCE [LARGE SCALE GENOMIC DNA]</scope>
    <source>
        <strain>PYR-GCK</strain>
    </source>
</reference>
<accession>A4T9U2</accession>
<comment type="function">
    <text evidence="1">Catalyzes the production of L-lysyl-tRNA(Lys)transfer and the transfer of a lysyl group from L-lysyl-tRNA(Lys) to membrane-bound phosphatidylglycerol (PG), which produces lysylphosphatidylglycerol (LPG), one of the components of the bacterial membrane with a positive net charge. LPG synthesis contributes to the resistance to cationic antimicrobial peptides (CAMPs) and likely protects M.tuberculosis against the CAMPs produced by competiting microorganisms (bacteriocins). In fact, the modification of anionic phosphatidylglycerol with positively charged L-lysine results in repulsion of the peptides (By similarity).</text>
</comment>
<comment type="catalytic activity">
    <reaction>
        <text>tRNA(Lys) + L-lysine + ATP = L-lysyl-tRNA(Lys) + AMP + diphosphate</text>
        <dbReference type="Rhea" id="RHEA:20792"/>
        <dbReference type="Rhea" id="RHEA-COMP:9696"/>
        <dbReference type="Rhea" id="RHEA-COMP:9697"/>
        <dbReference type="ChEBI" id="CHEBI:30616"/>
        <dbReference type="ChEBI" id="CHEBI:32551"/>
        <dbReference type="ChEBI" id="CHEBI:33019"/>
        <dbReference type="ChEBI" id="CHEBI:78442"/>
        <dbReference type="ChEBI" id="CHEBI:78529"/>
        <dbReference type="ChEBI" id="CHEBI:456215"/>
        <dbReference type="EC" id="6.1.1.6"/>
    </reaction>
</comment>
<comment type="catalytic activity">
    <reaction>
        <text>L-lysyl-tRNA(Lys) + a 1,2-diacyl-sn-glycero-3-phospho-(1'-sn-glycerol) = a 1,2-diacyl-sn-glycero-3-phospho-1'-(3'-O-L-lysyl)-sn-glycerol + tRNA(Lys)</text>
        <dbReference type="Rhea" id="RHEA:10668"/>
        <dbReference type="Rhea" id="RHEA-COMP:9696"/>
        <dbReference type="Rhea" id="RHEA-COMP:9697"/>
        <dbReference type="ChEBI" id="CHEBI:64716"/>
        <dbReference type="ChEBI" id="CHEBI:75792"/>
        <dbReference type="ChEBI" id="CHEBI:78442"/>
        <dbReference type="ChEBI" id="CHEBI:78529"/>
        <dbReference type="EC" id="2.3.2.3"/>
    </reaction>
</comment>
<comment type="cofactor">
    <cofactor evidence="1">
        <name>Mg(2+)</name>
        <dbReference type="ChEBI" id="CHEBI:18420"/>
    </cofactor>
    <text evidence="1">Binds 3 Mg(2+) ions per subunit.</text>
</comment>
<comment type="subcellular location">
    <subcellularLocation>
        <location evidence="3">Cell membrane</location>
        <topology evidence="3">Multi-pass membrane protein</topology>
    </subcellularLocation>
</comment>
<comment type="similarity">
    <text evidence="3">In the N-terminal section; belongs to the LPG synthetase family.</text>
</comment>
<comment type="similarity">
    <text evidence="3">In the C-terminal section; belongs to the class-II aminoacyl-tRNA synthetase family.</text>
</comment>
<organism>
    <name type="scientific">Mycolicibacterium gilvum (strain PYR-GCK)</name>
    <name type="common">Mycobacterium gilvum (strain PYR-GCK)</name>
    <dbReference type="NCBI Taxonomy" id="350054"/>
    <lineage>
        <taxon>Bacteria</taxon>
        <taxon>Bacillati</taxon>
        <taxon>Actinomycetota</taxon>
        <taxon>Actinomycetes</taxon>
        <taxon>Mycobacteriales</taxon>
        <taxon>Mycobacteriaceae</taxon>
        <taxon>Mycolicibacterium</taxon>
    </lineage>
</organism>